<name>IFA1_CAEEL</name>
<organism>
    <name type="scientific">Caenorhabditis elegans</name>
    <dbReference type="NCBI Taxonomy" id="6239"/>
    <lineage>
        <taxon>Eukaryota</taxon>
        <taxon>Metazoa</taxon>
        <taxon>Ecdysozoa</taxon>
        <taxon>Nematoda</taxon>
        <taxon>Chromadorea</taxon>
        <taxon>Rhabditida</taxon>
        <taxon>Rhabditina</taxon>
        <taxon>Rhabditomorpha</taxon>
        <taxon>Rhabditoidea</taxon>
        <taxon>Rhabditidae</taxon>
        <taxon>Peloderinae</taxon>
        <taxon>Caenorhabditis</taxon>
    </lineage>
</organism>
<accession>P90901</accession>
<accession>G5ECT5</accession>
<accession>Q0G822</accession>
<accession>Q17599</accession>
<accession>Q20141</accession>
<accession>Q8MLX8</accession>
<keyword id="KW-0025">Alternative splicing</keyword>
<keyword id="KW-0175">Coiled coil</keyword>
<keyword id="KW-0963">Cytoplasm</keyword>
<keyword id="KW-0403">Intermediate filament</keyword>
<keyword id="KW-1185">Reference proteome</keyword>
<evidence type="ECO:0000255" key="1">
    <source>
        <dbReference type="PROSITE-ProRule" id="PRU01187"/>
    </source>
</evidence>
<evidence type="ECO:0000255" key="2">
    <source>
        <dbReference type="PROSITE-ProRule" id="PRU01188"/>
    </source>
</evidence>
<evidence type="ECO:0000256" key="3">
    <source>
        <dbReference type="SAM" id="MobiDB-lite"/>
    </source>
</evidence>
<evidence type="ECO:0000269" key="4">
    <source>
    </source>
</evidence>
<evidence type="ECO:0000269" key="5">
    <source>
    </source>
</evidence>
<evidence type="ECO:0000269" key="6">
    <source>
    </source>
</evidence>
<evidence type="ECO:0000305" key="7"/>
<proteinExistence type="evidence at protein level"/>
<sequence length="575" mass="66531">MMEITRETMSFTSTTPSARAPLGGRTTGNVTSQDRMLKIVTEMRSGAGSGLSPFGQNAASTIRDSREREKKEMSDLNDRLASYIEKVRFLEAQNRKLAADLDALRSKWGKDTHNIRNMYEGELVDAQKLIDETNKQRKDMEGQLKKMQDELAEMRRKLEDATKGREQDRAKIDALLVTLSNLEAEISLLKRRIAQLEDEVKRIKQENQRLLSELQRARTDLDQETLNRIDYQNQVQTLLEEIDFLRRVHDNEIKELQTLASRDTTPENREFFKNELSSAIRDIREEYDQVNNVHRNDMESWYRLKVQEIQTQSARQNMEQGYAKEEVKRLRTQLSDLRGKLADLESRNSLLEKQIQELNYQLEDDQRSYEAALNDRDSQIRKMREECQALMVELQMLLDTKQTLDAEIAIYRKMLEGEENRAGLKQLVEQVVKTHAITQETDTETMRVVKGETASRQSFQRSAKGNVSIHEASPDGKFIVLQNTHRAKDEAIGEWKLKRRIDGKRENVYTLPRDFVLRAGKTLKIFARNQGVASPPDQLVYDAEDSFGSGNNVQTILFNKEGEERATHIQRQSTA</sequence>
<gene>
    <name type="primary">ifa-1</name>
    <name type="ORF">F38B2.1</name>
</gene>
<protein>
    <recommendedName>
        <fullName>Intermediate filament protein ifa-1</fullName>
    </recommendedName>
    <alternativeName>
        <fullName>Cel IF A1</fullName>
    </alternativeName>
    <alternativeName>
        <fullName>Intermediate filament protein A1</fullName>
        <shortName>IF-A1</shortName>
    </alternativeName>
</protein>
<dbReference type="EMBL" id="X70834">
    <property type="protein sequence ID" value="CAA50182.1"/>
    <property type="molecule type" value="Genomic_DNA"/>
</dbReference>
<dbReference type="EMBL" id="Z50045">
    <property type="protein sequence ID" value="CAA90365.3"/>
    <property type="molecule type" value="Genomic_DNA"/>
</dbReference>
<dbReference type="EMBL" id="Z73423">
    <property type="protein sequence ID" value="CAA90365.3"/>
    <property type="status" value="JOINED"/>
    <property type="molecule type" value="Genomic_DNA"/>
</dbReference>
<dbReference type="EMBL" id="Z50045">
    <property type="protein sequence ID" value="CAD44129.1"/>
    <property type="molecule type" value="Genomic_DNA"/>
</dbReference>
<dbReference type="EMBL" id="Z73423">
    <property type="protein sequence ID" value="CAD44129.1"/>
    <property type="status" value="JOINED"/>
    <property type="molecule type" value="Genomic_DNA"/>
</dbReference>
<dbReference type="EMBL" id="Z50045">
    <property type="protein sequence ID" value="CAL36494.1"/>
    <property type="molecule type" value="Genomic_DNA"/>
</dbReference>
<dbReference type="EMBL" id="Z73423">
    <property type="protein sequence ID" value="CAL36494.1"/>
    <property type="status" value="JOINED"/>
    <property type="molecule type" value="Genomic_DNA"/>
</dbReference>
<dbReference type="EMBL" id="Z50045">
    <property type="protein sequence ID" value="CBI83234.1"/>
    <property type="molecule type" value="Genomic_DNA"/>
</dbReference>
<dbReference type="EMBL" id="Z73423">
    <property type="protein sequence ID" value="CBI83234.1"/>
    <property type="status" value="JOINED"/>
    <property type="molecule type" value="Genomic_DNA"/>
</dbReference>
<dbReference type="PIR" id="T18872">
    <property type="entry name" value="T18872"/>
</dbReference>
<dbReference type="RefSeq" id="NP_001076764.1">
    <molecule id="P90901-3"/>
    <property type="nucleotide sequence ID" value="NM_001083295.4"/>
</dbReference>
<dbReference type="RefSeq" id="NP_001257139.1">
    <molecule id="P90901-4"/>
    <property type="nucleotide sequence ID" value="NM_001270210.4"/>
</dbReference>
<dbReference type="RefSeq" id="NP_741902.1">
    <molecule id="P90901-1"/>
    <property type="nucleotide sequence ID" value="NM_171777.9"/>
</dbReference>
<dbReference type="RefSeq" id="NP_741903.1">
    <molecule id="P90901-2"/>
    <property type="nucleotide sequence ID" value="NM_171778.7"/>
</dbReference>
<dbReference type="SMR" id="P90901"/>
<dbReference type="BioGRID" id="46226">
    <property type="interactions" value="23"/>
</dbReference>
<dbReference type="DIP" id="DIP-25729N"/>
<dbReference type="FunCoup" id="P90901">
    <property type="interactions" value="11"/>
</dbReference>
<dbReference type="IntAct" id="P90901">
    <property type="interactions" value="10"/>
</dbReference>
<dbReference type="MINT" id="P90901"/>
<dbReference type="STRING" id="6239.F38B2.1d.1"/>
<dbReference type="iPTMnet" id="P90901"/>
<dbReference type="PaxDb" id="6239-F38B2.1d"/>
<dbReference type="PeptideAtlas" id="P90901"/>
<dbReference type="EnsemblMetazoa" id="F38B2.1a.1">
    <molecule id="P90901-1"/>
    <property type="protein sequence ID" value="F38B2.1a.1"/>
    <property type="gene ID" value="WBGene00002050"/>
</dbReference>
<dbReference type="EnsemblMetazoa" id="F38B2.1b.1">
    <molecule id="P90901-2"/>
    <property type="protein sequence ID" value="F38B2.1b.1"/>
    <property type="gene ID" value="WBGene00002050"/>
</dbReference>
<dbReference type="EnsemblMetazoa" id="F38B2.1c.1">
    <molecule id="P90901-3"/>
    <property type="protein sequence ID" value="F38B2.1c.1"/>
    <property type="gene ID" value="WBGene00002050"/>
</dbReference>
<dbReference type="EnsemblMetazoa" id="F38B2.1d.1">
    <molecule id="P90901-4"/>
    <property type="protein sequence ID" value="F38B2.1d.1"/>
    <property type="gene ID" value="WBGene00002050"/>
</dbReference>
<dbReference type="GeneID" id="181316"/>
<dbReference type="KEGG" id="cel:CELE_F38B2.1"/>
<dbReference type="UCSC" id="F38B2.1c.4">
    <property type="organism name" value="c. elegans"/>
</dbReference>
<dbReference type="AGR" id="WB:WBGene00002050"/>
<dbReference type="CTD" id="181316"/>
<dbReference type="WormBase" id="F38B2.1a">
    <molecule id="P90901-1"/>
    <property type="protein sequence ID" value="CE31506"/>
    <property type="gene ID" value="WBGene00002050"/>
    <property type="gene designation" value="ifa-1"/>
</dbReference>
<dbReference type="WormBase" id="F38B2.1b">
    <molecule id="P90901-2"/>
    <property type="protein sequence ID" value="CE31507"/>
    <property type="gene ID" value="WBGene00002050"/>
    <property type="gene designation" value="ifa-1"/>
</dbReference>
<dbReference type="WormBase" id="F38B2.1c">
    <molecule id="P90901-3"/>
    <property type="protein sequence ID" value="CE05824"/>
    <property type="gene ID" value="WBGene00002050"/>
    <property type="gene designation" value="ifa-1"/>
</dbReference>
<dbReference type="WormBase" id="F38B2.1d">
    <molecule id="P90901-4"/>
    <property type="protein sequence ID" value="CE24961"/>
    <property type="gene ID" value="WBGene00002050"/>
    <property type="gene designation" value="ifa-1"/>
</dbReference>
<dbReference type="eggNOG" id="KOG0977">
    <property type="taxonomic scope" value="Eukaryota"/>
</dbReference>
<dbReference type="InParanoid" id="P90901"/>
<dbReference type="OMA" id="HIQRQST"/>
<dbReference type="OrthoDB" id="2441647at2759"/>
<dbReference type="PhylomeDB" id="P90901"/>
<dbReference type="Reactome" id="R-CEL-2559584">
    <property type="pathway name" value="Formation of Senescence-Associated Heterochromatin Foci (SAHF)"/>
</dbReference>
<dbReference type="Reactome" id="R-CEL-4419969">
    <property type="pathway name" value="Depolymerization of the Nuclear Lamina"/>
</dbReference>
<dbReference type="Reactome" id="R-CEL-9013405">
    <property type="pathway name" value="RHOD GTPase cycle"/>
</dbReference>
<dbReference type="Reactome" id="R-CEL-9035034">
    <property type="pathway name" value="RHOF GTPase cycle"/>
</dbReference>
<dbReference type="SignaLink" id="P90901"/>
<dbReference type="PRO" id="PR:P90901"/>
<dbReference type="Proteomes" id="UP000001940">
    <property type="component" value="Chromosome X"/>
</dbReference>
<dbReference type="Bgee" id="WBGene00002050">
    <property type="expression patterns" value="Expressed in larva and 3 other cell types or tissues"/>
</dbReference>
<dbReference type="ExpressionAtlas" id="P90901">
    <property type="expression patterns" value="baseline and differential"/>
</dbReference>
<dbReference type="GO" id="GO:0005737">
    <property type="term" value="C:cytoplasm"/>
    <property type="evidence" value="ECO:0007669"/>
    <property type="project" value="UniProtKB-SubCell"/>
</dbReference>
<dbReference type="GO" id="GO:0005882">
    <property type="term" value="C:intermediate filament"/>
    <property type="evidence" value="ECO:0000314"/>
    <property type="project" value="WormBase"/>
</dbReference>
<dbReference type="GO" id="GO:0005635">
    <property type="term" value="C:nuclear envelope"/>
    <property type="evidence" value="ECO:0000318"/>
    <property type="project" value="GO_Central"/>
</dbReference>
<dbReference type="GO" id="GO:0005652">
    <property type="term" value="C:nuclear lamina"/>
    <property type="evidence" value="ECO:0000318"/>
    <property type="project" value="GO_Central"/>
</dbReference>
<dbReference type="GO" id="GO:0005200">
    <property type="term" value="F:structural constituent of cytoskeleton"/>
    <property type="evidence" value="ECO:0000318"/>
    <property type="project" value="GO_Central"/>
</dbReference>
<dbReference type="GO" id="GO:0031507">
    <property type="term" value="P:heterochromatin formation"/>
    <property type="evidence" value="ECO:0000318"/>
    <property type="project" value="GO_Central"/>
</dbReference>
<dbReference type="GO" id="GO:0006998">
    <property type="term" value="P:nuclear envelope organization"/>
    <property type="evidence" value="ECO:0000318"/>
    <property type="project" value="GO_Central"/>
</dbReference>
<dbReference type="GO" id="GO:0007097">
    <property type="term" value="P:nuclear migration"/>
    <property type="evidence" value="ECO:0000318"/>
    <property type="project" value="GO_Central"/>
</dbReference>
<dbReference type="GO" id="GO:0051664">
    <property type="term" value="P:nuclear pore localization"/>
    <property type="evidence" value="ECO:0000318"/>
    <property type="project" value="GO_Central"/>
</dbReference>
<dbReference type="GO" id="GO:0090435">
    <property type="term" value="P:protein localization to nuclear envelope"/>
    <property type="evidence" value="ECO:0000318"/>
    <property type="project" value="GO_Central"/>
</dbReference>
<dbReference type="FunFam" id="1.20.5.1160:FF:000016">
    <property type="entry name" value="Intermediate filament protein A"/>
    <property type="match status" value="1"/>
</dbReference>
<dbReference type="FunFam" id="2.60.40.1260:FF:000003">
    <property type="entry name" value="Intermediate filament protein A"/>
    <property type="match status" value="1"/>
</dbReference>
<dbReference type="FunFam" id="1.20.5.170:FF:000058">
    <property type="entry name" value="Intermediate filament protein B"/>
    <property type="match status" value="1"/>
</dbReference>
<dbReference type="FunFam" id="1.20.5.1160:FF:000023">
    <property type="entry name" value="Intermediate filament protein ifa-1"/>
    <property type="match status" value="1"/>
</dbReference>
<dbReference type="FunFam" id="1.20.5.500:FF:000001">
    <property type="entry name" value="Type II keratin 23"/>
    <property type="match status" value="1"/>
</dbReference>
<dbReference type="Gene3D" id="1.20.5.170">
    <property type="match status" value="1"/>
</dbReference>
<dbReference type="Gene3D" id="2.60.40.1260">
    <property type="entry name" value="Lamin Tail domain"/>
    <property type="match status" value="1"/>
</dbReference>
<dbReference type="Gene3D" id="1.20.5.500">
    <property type="entry name" value="Single helix bin"/>
    <property type="match status" value="1"/>
</dbReference>
<dbReference type="Gene3D" id="1.20.5.1160">
    <property type="entry name" value="Vasodilator-stimulated phosphoprotein"/>
    <property type="match status" value="2"/>
</dbReference>
<dbReference type="InterPro" id="IPR018039">
    <property type="entry name" value="IF_conserved"/>
</dbReference>
<dbReference type="InterPro" id="IPR039008">
    <property type="entry name" value="IF_rod_dom"/>
</dbReference>
<dbReference type="InterPro" id="IPR016451">
    <property type="entry name" value="Intermed_filament_ifa/ifb"/>
</dbReference>
<dbReference type="InterPro" id="IPR001322">
    <property type="entry name" value="Lamin_tail_dom"/>
</dbReference>
<dbReference type="InterPro" id="IPR036415">
    <property type="entry name" value="Lamin_tail_dom_sf"/>
</dbReference>
<dbReference type="PANTHER" id="PTHR45721:SF12">
    <property type="entry name" value="INTERMEDIATE FILAMENT PROTEIN IFA-1"/>
    <property type="match status" value="1"/>
</dbReference>
<dbReference type="PANTHER" id="PTHR45721">
    <property type="entry name" value="LAMIN DM0-RELATED"/>
    <property type="match status" value="1"/>
</dbReference>
<dbReference type="Pfam" id="PF00038">
    <property type="entry name" value="Filament"/>
    <property type="match status" value="2"/>
</dbReference>
<dbReference type="Pfam" id="PF00932">
    <property type="entry name" value="LTD"/>
    <property type="match status" value="1"/>
</dbReference>
<dbReference type="PIRSF" id="PIRSF005546">
    <property type="entry name" value="Intermed_filamnt_Ifb-2"/>
    <property type="match status" value="1"/>
</dbReference>
<dbReference type="SMART" id="SM01391">
    <property type="entry name" value="Filament"/>
    <property type="match status" value="1"/>
</dbReference>
<dbReference type="SUPFAM" id="SSF64593">
    <property type="entry name" value="Intermediate filament protein, coiled coil region"/>
    <property type="match status" value="2"/>
</dbReference>
<dbReference type="SUPFAM" id="SSF74853">
    <property type="entry name" value="Lamin A/C globular tail domain"/>
    <property type="match status" value="1"/>
</dbReference>
<dbReference type="PROSITE" id="PS00226">
    <property type="entry name" value="IF_ROD_1"/>
    <property type="match status" value="1"/>
</dbReference>
<dbReference type="PROSITE" id="PS51842">
    <property type="entry name" value="IF_ROD_2"/>
    <property type="match status" value="1"/>
</dbReference>
<dbReference type="PROSITE" id="PS51841">
    <property type="entry name" value="LTD"/>
    <property type="match status" value="1"/>
</dbReference>
<feature type="chain" id="PRO_0000063834" description="Intermediate filament protein ifa-1">
    <location>
        <begin position="1"/>
        <end position="575"/>
    </location>
</feature>
<feature type="domain" description="IF rod" evidence="2">
    <location>
        <begin position="69"/>
        <end position="422"/>
    </location>
</feature>
<feature type="domain" description="LTD" evidence="1">
    <location>
        <begin position="455"/>
        <end position="572"/>
    </location>
</feature>
<feature type="region of interest" description="Head">
    <location>
        <begin position="1"/>
        <end position="72"/>
    </location>
</feature>
<feature type="region of interest" description="Disordered" evidence="3">
    <location>
        <begin position="1"/>
        <end position="30"/>
    </location>
</feature>
<feature type="region of interest" description="Disordered" evidence="3">
    <location>
        <begin position="45"/>
        <end position="72"/>
    </location>
</feature>
<feature type="region of interest" description="Coil 1A">
    <location>
        <begin position="73"/>
        <end position="104"/>
    </location>
</feature>
<feature type="region of interest" description="Linker 1">
    <location>
        <begin position="105"/>
        <end position="118"/>
    </location>
</feature>
<feature type="region of interest" description="Coil 1B">
    <location>
        <begin position="119"/>
        <end position="256"/>
    </location>
</feature>
<feature type="region of interest" description="Linker 12">
    <location>
        <begin position="257"/>
        <end position="274"/>
    </location>
</feature>
<feature type="region of interest" description="Coil 2">
    <location>
        <begin position="275"/>
        <end position="422"/>
    </location>
</feature>
<feature type="region of interest" description="Tail">
    <location>
        <begin position="423"/>
        <end position="572"/>
    </location>
</feature>
<feature type="compositionally biased region" description="Polar residues" evidence="3">
    <location>
        <begin position="7"/>
        <end position="17"/>
    </location>
</feature>
<feature type="compositionally biased region" description="Basic and acidic residues" evidence="3">
    <location>
        <begin position="63"/>
        <end position="72"/>
    </location>
</feature>
<feature type="splice variant" id="VSP_010144" description="In isoform b." evidence="7">
    <original>MMEITRET</original>
    <variation>MYTTTRPA</variation>
    <location>
        <begin position="1"/>
        <end position="8"/>
    </location>
</feature>
<feature type="splice variant" id="VSP_010145" description="In isoform c." evidence="7">
    <location>
        <begin position="1"/>
        <end position="8"/>
    </location>
</feature>
<feature type="splice variant" id="VSP_010146" description="In isoform d." evidence="7">
    <original>T</original>
    <variation>SEFLHFNYLNYSDDFPGA</variation>
    <location>
        <position position="8"/>
    </location>
</feature>
<feature type="sequence conflict" description="In Ref. 1; CAA50182." evidence="7" ref="1">
    <original>V</original>
    <variation>VV</variation>
    <location>
        <position position="124"/>
    </location>
</feature>
<feature type="sequence conflict" description="In Ref. 1; CAA50182." evidence="7" ref="1">
    <location>
        <begin position="442"/>
        <end position="443"/>
    </location>
</feature>
<reference key="1">
    <citation type="journal article" date="1994" name="EMBO J.">
        <title>Eight genes and alternative RNA processing pathways generate an unexpectedly large diversity of cytoplasmic intermediate filament proteins in the nematode Caenorhabditis elegans.</title>
        <authorList>
            <person name="Dodemont H."/>
            <person name="Riemer D."/>
            <person name="Ledger T.N."/>
            <person name="Weber K."/>
        </authorList>
    </citation>
    <scope>NUCLEOTIDE SEQUENCE [GENOMIC DNA]</scope>
    <scope>ALTERNATIVE SPLICING</scope>
    <source>
        <strain>Bristol N2</strain>
    </source>
</reference>
<reference key="2">
    <citation type="journal article" date="1998" name="Science">
        <title>Genome sequence of the nematode C. elegans: a platform for investigating biology.</title>
        <authorList>
            <consortium name="The C. elegans sequencing consortium"/>
        </authorList>
    </citation>
    <scope>NUCLEOTIDE SEQUENCE [LARGE SCALE GENOMIC DNA]</scope>
    <scope>ALTERNATIVE SPLICING</scope>
    <source>
        <strain>Bristol N2</strain>
    </source>
</reference>
<reference key="3">
    <citation type="journal article" date="2001" name="Proc. Natl. Acad. Sci. U.S.A.">
        <title>Essential roles for four cytoplasmic intermediate filament proteins in Caenorhabditis elegans development.</title>
        <authorList>
            <person name="Karabinos A."/>
            <person name="Schmidt H."/>
            <person name="Harborth J."/>
            <person name="Schnabel R."/>
            <person name="Weber K."/>
        </authorList>
    </citation>
    <scope>FUNCTION</scope>
    <scope>SUBCELLULAR LOCATION</scope>
    <scope>TISSUE SPECIFICITY</scope>
</reference>
<reference key="4">
    <citation type="journal article" date="2003" name="J. Mol. Biol.">
        <title>In vivo and in vitro evidence that the four essential intermediate filament (IF) proteins A1, A2, A3 and B1 of the nematode Caenorhabditis elegans form an obligate heteropolymeric IF system.</title>
        <authorList>
            <person name="Karabinos A."/>
            <person name="Schulze E."/>
            <person name="Schuenemann J."/>
            <person name="Parry D.A.D."/>
            <person name="Weber K."/>
        </authorList>
    </citation>
    <scope>TISSUE SPECIFICITY</scope>
    <scope>ALTERNATIVE SPLICING (ISOFORMS C AND D)</scope>
    <scope>INTERACTION WITH IFB-1 AND IFA-4</scope>
</reference>
<reference key="5">
    <citation type="journal article" date="2004" name="Eur. J. Cell Biol.">
        <title>Most genes encoding cytoplasmic intermediate filament (IF) proteins of the nematode Caenorhabditis elegans are required in late embryogenesis.</title>
        <authorList>
            <person name="Karabinos A."/>
            <person name="Schunemann J."/>
            <person name="Weber K."/>
        </authorList>
    </citation>
    <scope>FUNCTION</scope>
    <scope>TISSUE SPECIFICITY</scope>
</reference>
<comment type="function">
    <text evidence="4 6">Cytoplasmic intermediate filaments make up the structural component of the cytoskeleton providing mechanical strength to cells. Essential protein required during embryogenesis especially for survival past the L1 larva stage, involved in intestine morphogenesis.</text>
</comment>
<comment type="subunit">
    <text>Forms some heteromeric filaments with ifb-1.</text>
</comment>
<comment type="subcellular location">
    <subcellularLocation>
        <location evidence="4">Cytoplasm</location>
    </subcellularLocation>
</comment>
<comment type="alternative products">
    <event type="alternative splicing"/>
    <isoform>
        <id>P90901-1</id>
        <name>a</name>
        <name>a1-M</name>
        <sequence type="displayed"/>
    </isoform>
    <isoform>
        <id>P90901-2</id>
        <name>b</name>
        <sequence type="described" ref="VSP_010144"/>
    </isoform>
    <isoform>
        <id>P90901-3</id>
        <name>c</name>
        <name>a1-L</name>
        <name>A1a</name>
        <sequence type="described" ref="VSP_010145"/>
    </isoform>
    <isoform>
        <id>P90901-4</id>
        <name>d</name>
        <name>a1-H</name>
        <name>A1b</name>
        <sequence type="described" ref="VSP_010146"/>
    </isoform>
</comment>
<comment type="tissue specificity">
    <text evidence="4 5 6">Isoform d is abundantly expressed in the marginal cells of the pharynx, forming apicobasally oriented thick filament bundles that are attached to the apical and basal plasma membrane by hemi-adherens junctions. Expression of isoform c is also seen in the excretory cells and in the uterus. Isoform c is detectable in the amphid sensory neurins and the pharyngeal-intestinal valve. Both isoform c and isoform d are expressed in the rectum and vulva and in some neurons of the tail. In larvae, expression is seen in the excretory cell, the vulva, the rectum and in the thick filament bundles of the pharynx. Expression in pharynx begins in late embryos.</text>
</comment>
<comment type="similarity">
    <text evidence="2">Belongs to the intermediate filament family.</text>
</comment>